<dbReference type="EC" id="3.-.-.-"/>
<dbReference type="EMBL" id="AP006716">
    <property type="protein sequence ID" value="BAE04822.1"/>
    <property type="molecule type" value="Genomic_DNA"/>
</dbReference>
<dbReference type="RefSeq" id="WP_011275805.1">
    <property type="nucleotide sequence ID" value="NC_007168.1"/>
</dbReference>
<dbReference type="SMR" id="Q4L6A3"/>
<dbReference type="KEGG" id="sha:SH1513"/>
<dbReference type="eggNOG" id="COG1473">
    <property type="taxonomic scope" value="Bacteria"/>
</dbReference>
<dbReference type="HOGENOM" id="CLU_023257_1_0_9"/>
<dbReference type="OrthoDB" id="9776731at2"/>
<dbReference type="Proteomes" id="UP000000543">
    <property type="component" value="Chromosome"/>
</dbReference>
<dbReference type="GO" id="GO:0016787">
    <property type="term" value="F:hydrolase activity"/>
    <property type="evidence" value="ECO:0007669"/>
    <property type="project" value="UniProtKB-KW"/>
</dbReference>
<dbReference type="Gene3D" id="3.30.70.360">
    <property type="match status" value="1"/>
</dbReference>
<dbReference type="Gene3D" id="3.40.630.10">
    <property type="entry name" value="Zn peptidases"/>
    <property type="match status" value="1"/>
</dbReference>
<dbReference type="InterPro" id="IPR017439">
    <property type="entry name" value="Amidohydrolase"/>
</dbReference>
<dbReference type="InterPro" id="IPR036264">
    <property type="entry name" value="Bact_exopeptidase_dim_dom"/>
</dbReference>
<dbReference type="InterPro" id="IPR002933">
    <property type="entry name" value="Peptidase_M20"/>
</dbReference>
<dbReference type="InterPro" id="IPR011650">
    <property type="entry name" value="Peptidase_M20_dimer"/>
</dbReference>
<dbReference type="NCBIfam" id="TIGR01891">
    <property type="entry name" value="amidohydrolases"/>
    <property type="match status" value="1"/>
</dbReference>
<dbReference type="PANTHER" id="PTHR11014:SF63">
    <property type="entry name" value="METALLOPEPTIDASE, PUTATIVE (AFU_ORTHOLOGUE AFUA_6G09600)-RELATED"/>
    <property type="match status" value="1"/>
</dbReference>
<dbReference type="PANTHER" id="PTHR11014">
    <property type="entry name" value="PEPTIDASE M20 FAMILY MEMBER"/>
    <property type="match status" value="1"/>
</dbReference>
<dbReference type="Pfam" id="PF07687">
    <property type="entry name" value="M20_dimer"/>
    <property type="match status" value="1"/>
</dbReference>
<dbReference type="Pfam" id="PF01546">
    <property type="entry name" value="Peptidase_M20"/>
    <property type="match status" value="1"/>
</dbReference>
<dbReference type="PIRSF" id="PIRSF005962">
    <property type="entry name" value="Pept_M20D_amidohydro"/>
    <property type="match status" value="1"/>
</dbReference>
<dbReference type="SUPFAM" id="SSF55031">
    <property type="entry name" value="Bacterial exopeptidase dimerisation domain"/>
    <property type="match status" value="1"/>
</dbReference>
<dbReference type="SUPFAM" id="SSF53187">
    <property type="entry name" value="Zn-dependent exopeptidases"/>
    <property type="match status" value="1"/>
</dbReference>
<accession>Q4L6A3</accession>
<keyword id="KW-0378">Hydrolase</keyword>
<protein>
    <recommendedName>
        <fullName>Uncharacterized hydrolase SH1513</fullName>
        <ecNumber>3.-.-.-</ecNumber>
    </recommendedName>
</protein>
<reference key="1">
    <citation type="journal article" date="2005" name="J. Bacteriol.">
        <title>Whole-genome sequencing of Staphylococcus haemolyticus uncovers the extreme plasticity of its genome and the evolution of human-colonizing staphylococcal species.</title>
        <authorList>
            <person name="Takeuchi F."/>
            <person name="Watanabe S."/>
            <person name="Baba T."/>
            <person name="Yuzawa H."/>
            <person name="Ito T."/>
            <person name="Morimoto Y."/>
            <person name="Kuroda M."/>
            <person name="Cui L."/>
            <person name="Takahashi M."/>
            <person name="Ankai A."/>
            <person name="Baba S."/>
            <person name="Fukui S."/>
            <person name="Lee J.C."/>
            <person name="Hiramatsu K."/>
        </authorList>
    </citation>
    <scope>NUCLEOTIDE SEQUENCE [LARGE SCALE GENOMIC DNA]</scope>
    <source>
        <strain>JCSC1435</strain>
    </source>
</reference>
<comment type="similarity">
    <text evidence="1">Belongs to the peptidase M20 family.</text>
</comment>
<name>Y1513_STAHJ</name>
<feature type="chain" id="PRO_0000298629" description="Uncharacterized hydrolase SH1513">
    <location>
        <begin position="1"/>
        <end position="383"/>
    </location>
</feature>
<sequence>MSELEFVTKHRRHLHQHPELSLHEFETTKYITQFLEELGVSYERPLETGAIAYLNGNSDHTIAFRADIDALPIFEENDVDYRSQTDNVMHACGHDGHTTALMLFVKRCKEMFDKGTLPHNVVFIFQPAEETGGGANRLIKAGAFNNYPIEAVFGIHVNPFADEGQVVIRDEEITASATEYRFFLKGLSSHVADKEQGHSCGEALLHVLNQVGQIQQYHLNGLKRNIVHMGHFEAGEAINTVASHGYLEGTIRTYDPNDLNVVKTQMHKIAESVSLLFNVDCEVKFEEGYPPTMNSPKLRASVEQAINAANLEVIDKPLPFLFGEDFSFYGQQLAPAYFAFVGTRNEDKGFVTGLHTSHLNFDEKVLIYVANYYEQLLMHYGEE</sequence>
<gene>
    <name type="ordered locus">SH1513</name>
</gene>
<organism>
    <name type="scientific">Staphylococcus haemolyticus (strain JCSC1435)</name>
    <dbReference type="NCBI Taxonomy" id="279808"/>
    <lineage>
        <taxon>Bacteria</taxon>
        <taxon>Bacillati</taxon>
        <taxon>Bacillota</taxon>
        <taxon>Bacilli</taxon>
        <taxon>Bacillales</taxon>
        <taxon>Staphylococcaceae</taxon>
        <taxon>Staphylococcus</taxon>
    </lineage>
</organism>
<evidence type="ECO:0000305" key="1"/>
<proteinExistence type="inferred from homology"/>